<accession>Q20CR3</accession>
<organism>
    <name type="scientific">Macaca mulatta</name>
    <name type="common">Rhesus macaque</name>
    <dbReference type="NCBI Taxonomy" id="9544"/>
    <lineage>
        <taxon>Eukaryota</taxon>
        <taxon>Metazoa</taxon>
        <taxon>Chordata</taxon>
        <taxon>Craniata</taxon>
        <taxon>Vertebrata</taxon>
        <taxon>Euteleostomi</taxon>
        <taxon>Mammalia</taxon>
        <taxon>Eutheria</taxon>
        <taxon>Euarchontoglires</taxon>
        <taxon>Primates</taxon>
        <taxon>Haplorrhini</taxon>
        <taxon>Catarrhini</taxon>
        <taxon>Cercopithecidae</taxon>
        <taxon>Cercopithecinae</taxon>
        <taxon>Macaca</taxon>
    </lineage>
</organism>
<name>RHCG_MACMU</name>
<comment type="function">
    <text evidence="2">Ammonium transporter involved in the maintenance of acid-base homeostasis. Transports ammonium and its related derivative methylammonium across the plasma membrane of epithelial cells likely contributing to renal transepithelial ammonia transport and ammonia metabolism. Postulated to primarily mediate an electroneutral bidirectional transport of NH3 ammonia species according to a mechanism that implies interaction of an NH4(+) ion with acidic residues of the pore entry followed by dissociation of NH4(+) into NH3 and H(+). As a result NH3 transits through the central pore and is protonated on the extracellular side reforming NH4(+) (By similarity). May act as a CO2 channel providing for renal acid secretion (By similarity).</text>
</comment>
<comment type="catalytic activity">
    <reaction evidence="2">
        <text>NH4(+)(in) = NH4(+)(out)</text>
        <dbReference type="Rhea" id="RHEA:28747"/>
        <dbReference type="ChEBI" id="CHEBI:28938"/>
    </reaction>
    <physiologicalReaction direction="left-to-right" evidence="2">
        <dbReference type="Rhea" id="RHEA:28748"/>
    </physiologicalReaction>
    <physiologicalReaction direction="right-to-left" evidence="2">
        <dbReference type="Rhea" id="RHEA:28749"/>
    </physiologicalReaction>
</comment>
<comment type="catalytic activity">
    <reaction evidence="2">
        <text>methylamine(out) = methylamine(in)</text>
        <dbReference type="Rhea" id="RHEA:74391"/>
        <dbReference type="ChEBI" id="CHEBI:59338"/>
    </reaction>
    <physiologicalReaction direction="left-to-right" evidence="2">
        <dbReference type="Rhea" id="RHEA:74392"/>
    </physiologicalReaction>
</comment>
<comment type="catalytic activity">
    <reaction evidence="2">
        <text>CO2(out) = CO2(in)</text>
        <dbReference type="Rhea" id="RHEA:74891"/>
        <dbReference type="ChEBI" id="CHEBI:16526"/>
    </reaction>
    <physiologicalReaction direction="left-to-right" evidence="2">
        <dbReference type="Rhea" id="RHEA:74892"/>
    </physiologicalReaction>
</comment>
<comment type="subunit">
    <text evidence="2">Homotrimer.</text>
</comment>
<comment type="subcellular location">
    <subcellularLocation>
        <location evidence="1">Apical cell membrane</location>
        <topology evidence="1">Multi-pass membrane protein</topology>
    </subcellularLocation>
    <text evidence="1">Also detected at the basolateral membrane and in subapical vesicles.</text>
</comment>
<comment type="PTM">
    <text evidence="1">N-glycosylated.</text>
</comment>
<comment type="similarity">
    <text evidence="4">Belongs to the ammonium transporter (TC 2.A.49) family. Rh subfamily.</text>
</comment>
<evidence type="ECO:0000250" key="1"/>
<evidence type="ECO:0000250" key="2">
    <source>
        <dbReference type="UniProtKB" id="Q9UBD6"/>
    </source>
</evidence>
<evidence type="ECO:0000255" key="3"/>
<evidence type="ECO:0000305" key="4"/>
<dbReference type="EMBL" id="DQ341266">
    <property type="protein sequence ID" value="ABD72472.1"/>
    <property type="molecule type" value="mRNA"/>
</dbReference>
<dbReference type="RefSeq" id="NP_001035036.1">
    <property type="nucleotide sequence ID" value="NM_001039947.1"/>
</dbReference>
<dbReference type="SMR" id="Q20CR3"/>
<dbReference type="FunCoup" id="Q20CR3">
    <property type="interactions" value="83"/>
</dbReference>
<dbReference type="STRING" id="9544.ENSMMUP00000072674"/>
<dbReference type="GlyCosmos" id="Q20CR3">
    <property type="glycosylation" value="1 site, No reported glycans"/>
</dbReference>
<dbReference type="GeneID" id="664731"/>
<dbReference type="KEGG" id="mcc:664731"/>
<dbReference type="CTD" id="51458"/>
<dbReference type="InParanoid" id="Q20CR3"/>
<dbReference type="OrthoDB" id="534912at2759"/>
<dbReference type="Proteomes" id="UP000006718">
    <property type="component" value="Unassembled WGS sequence"/>
</dbReference>
<dbReference type="GO" id="GO:0016324">
    <property type="term" value="C:apical plasma membrane"/>
    <property type="evidence" value="ECO:0000250"/>
    <property type="project" value="UniProtKB"/>
</dbReference>
<dbReference type="GO" id="GO:0016323">
    <property type="term" value="C:basolateral plasma membrane"/>
    <property type="evidence" value="ECO:0000250"/>
    <property type="project" value="UniProtKB"/>
</dbReference>
<dbReference type="GO" id="GO:0031410">
    <property type="term" value="C:cytoplasmic vesicle"/>
    <property type="evidence" value="ECO:0000250"/>
    <property type="project" value="UniProtKB"/>
</dbReference>
<dbReference type="GO" id="GO:0005886">
    <property type="term" value="C:plasma membrane"/>
    <property type="evidence" value="ECO:0000250"/>
    <property type="project" value="UniProtKB"/>
</dbReference>
<dbReference type="GO" id="GO:0008519">
    <property type="term" value="F:ammonium channel activity"/>
    <property type="evidence" value="ECO:0000250"/>
    <property type="project" value="UniProtKB"/>
</dbReference>
<dbReference type="GO" id="GO:0030506">
    <property type="term" value="F:ankyrin binding"/>
    <property type="evidence" value="ECO:0000250"/>
    <property type="project" value="UniProtKB"/>
</dbReference>
<dbReference type="GO" id="GO:0035379">
    <property type="term" value="F:carbon dioxide transmembrane transporter activity"/>
    <property type="evidence" value="ECO:0000250"/>
    <property type="project" value="UniProtKB"/>
</dbReference>
<dbReference type="GO" id="GO:0097272">
    <property type="term" value="P:ammonium homeostasis"/>
    <property type="evidence" value="ECO:0000318"/>
    <property type="project" value="GO_Central"/>
</dbReference>
<dbReference type="GO" id="GO:0072488">
    <property type="term" value="P:ammonium transmembrane transport"/>
    <property type="evidence" value="ECO:0000250"/>
    <property type="project" value="UniProtKB"/>
</dbReference>
<dbReference type="GO" id="GO:0006873">
    <property type="term" value="P:intracellular monoatomic ion homeostasis"/>
    <property type="evidence" value="ECO:0000250"/>
    <property type="project" value="UniProtKB"/>
</dbReference>
<dbReference type="GO" id="GO:0070634">
    <property type="term" value="P:transepithelial ammonium transport"/>
    <property type="evidence" value="ECO:0000250"/>
    <property type="project" value="UniProtKB"/>
</dbReference>
<dbReference type="FunFam" id="1.10.3430.10:FF:000001">
    <property type="entry name" value="Ammonium transporter Rh type C"/>
    <property type="match status" value="1"/>
</dbReference>
<dbReference type="Gene3D" id="1.10.3430.10">
    <property type="entry name" value="Ammonium transporter AmtB like domains"/>
    <property type="match status" value="1"/>
</dbReference>
<dbReference type="InterPro" id="IPR029020">
    <property type="entry name" value="Ammonium/urea_transptr"/>
</dbReference>
<dbReference type="InterPro" id="IPR024041">
    <property type="entry name" value="NH4_transpt_AmtB-like_dom"/>
</dbReference>
<dbReference type="InterPro" id="IPR002229">
    <property type="entry name" value="RhesusRHD"/>
</dbReference>
<dbReference type="PANTHER" id="PTHR11730">
    <property type="entry name" value="AMMONIUM TRANSPORTER"/>
    <property type="match status" value="1"/>
</dbReference>
<dbReference type="PANTHER" id="PTHR11730:SF30">
    <property type="entry name" value="AMMONIUM TRANSPORTER RH TYPE C"/>
    <property type="match status" value="1"/>
</dbReference>
<dbReference type="Pfam" id="PF00909">
    <property type="entry name" value="Ammonium_transp"/>
    <property type="match status" value="1"/>
</dbReference>
<dbReference type="PRINTS" id="PR00342">
    <property type="entry name" value="RHESUSRHD"/>
</dbReference>
<dbReference type="SUPFAM" id="SSF111352">
    <property type="entry name" value="Ammonium transporter"/>
    <property type="match status" value="1"/>
</dbReference>
<gene>
    <name type="primary">RHCG</name>
</gene>
<keyword id="KW-0924">Ammonia transport</keyword>
<keyword id="KW-1003">Cell membrane</keyword>
<keyword id="KW-0325">Glycoprotein</keyword>
<keyword id="KW-0472">Membrane</keyword>
<keyword id="KW-1185">Reference proteome</keyword>
<keyword id="KW-0812">Transmembrane</keyword>
<keyword id="KW-1133">Transmembrane helix</keyword>
<keyword id="KW-0813">Transport</keyword>
<reference key="1">
    <citation type="submission" date="2005-12" db="EMBL/GenBank/DDBJ databases">
        <title>Gene cloning and primary sequence of Rhesus monkey Rh type C glycoprotein (RhCG).</title>
        <authorList>
            <person name="Chen Y."/>
            <person name="Huang C.-H."/>
        </authorList>
    </citation>
    <scope>NUCLEOTIDE SEQUENCE [MRNA]</scope>
</reference>
<sequence>MAWNTNLRWRLPLTCLLLQVAMVILFGVFVRYDFDADAHWWTERKHKNLSEVENEFYYRYPSFQDVHVMVFVGFGFLMTFLQRYGFSAVGFNFLLAAFGIQWALLMQGWFHFLEGRYIVVGVENLINADFCVASVCVAFGAVLGKVSPIQLLIMTFFQVTLFAVNEFILLNLLKVKDAGGSMTIHTFYAYFELTVTRILYRRNLEQSKERQSSAYQSDLFAMIGTLFLWMYWPSFNSAISYHGDSQHRAAINTYCSLAACVLTSVAVSSALHKKGKLDMVHIQNATLAGGVAVGTTAEMMLMPYGALIIGFICGIISTLGFVYLTPFLESRLHIQDTCGINNLHGIPGIIGGIVGAVTAASASLEVYGKEGLVHSFDFQDFKRDWTARTQGKFQIYGLLVTLAMALMGGIIVGLILRLPFWGQPSDENCFEDAVYWEMPEGNSTVYIPEDPTFKPSGPSVPSVPMVSPLPMASSVPLVP</sequence>
<protein>
    <recommendedName>
        <fullName>Ammonium transporter Rh type C</fullName>
    </recommendedName>
    <alternativeName>
        <fullName>Rhesus blood group family type C glycoprotein</fullName>
        <shortName>Rh family type C glycoprotein</shortName>
        <shortName>Rh type C glycoprotein</shortName>
    </alternativeName>
</protein>
<proteinExistence type="evidence at transcript level"/>
<feature type="chain" id="PRO_0000283578" description="Ammonium transporter Rh type C">
    <location>
        <begin position="1"/>
        <end position="479"/>
    </location>
</feature>
<feature type="topological domain" description="Cytoplasmic" evidence="3">
    <location>
        <begin position="1"/>
        <end position="9"/>
    </location>
</feature>
<feature type="transmembrane region" description="Helical" evidence="3">
    <location>
        <begin position="10"/>
        <end position="30"/>
    </location>
</feature>
<feature type="topological domain" description="Extracellular" evidence="3">
    <location>
        <begin position="31"/>
        <end position="60"/>
    </location>
</feature>
<feature type="transmembrane region" description="Helical" evidence="3">
    <location>
        <begin position="61"/>
        <end position="81"/>
    </location>
</feature>
<feature type="topological domain" description="Cytoplasmic" evidence="3">
    <location>
        <begin position="82"/>
        <end position="85"/>
    </location>
</feature>
<feature type="transmembrane region" description="Helical" evidence="3">
    <location>
        <begin position="86"/>
        <end position="106"/>
    </location>
</feature>
<feature type="topological domain" description="Extracellular" evidence="3">
    <location>
        <begin position="107"/>
        <end position="123"/>
    </location>
</feature>
<feature type="transmembrane region" description="Helical" evidence="3">
    <location>
        <begin position="124"/>
        <end position="144"/>
    </location>
</feature>
<feature type="topological domain" description="Cytoplasmic" evidence="3">
    <location>
        <begin position="145"/>
        <end position="148"/>
    </location>
</feature>
<feature type="transmembrane region" description="Helical" evidence="3">
    <location>
        <begin position="149"/>
        <end position="169"/>
    </location>
</feature>
<feature type="topological domain" description="Extracellular" evidence="3">
    <location>
        <begin position="170"/>
        <end position="177"/>
    </location>
</feature>
<feature type="transmembrane region" description="Helical" evidence="3">
    <location>
        <begin position="178"/>
        <end position="200"/>
    </location>
</feature>
<feature type="topological domain" description="Cytoplasmic" evidence="3">
    <location>
        <begin position="201"/>
        <end position="218"/>
    </location>
</feature>
<feature type="transmembrane region" description="Helical" evidence="3">
    <location>
        <begin position="219"/>
        <end position="239"/>
    </location>
</feature>
<feature type="topological domain" description="Extracellular" evidence="3">
    <location>
        <begin position="240"/>
        <end position="250"/>
    </location>
</feature>
<feature type="transmembrane region" description="Helical" evidence="3">
    <location>
        <begin position="251"/>
        <end position="271"/>
    </location>
</feature>
<feature type="topological domain" description="Cytoplasmic" evidence="3">
    <location>
        <begin position="272"/>
        <end position="281"/>
    </location>
</feature>
<feature type="transmembrane region" description="Helical" evidence="3">
    <location>
        <begin position="282"/>
        <end position="302"/>
    </location>
</feature>
<feature type="topological domain" description="Extracellular" evidence="3">
    <location>
        <position position="303"/>
    </location>
</feature>
<feature type="transmembrane region" description="Helical" evidence="3">
    <location>
        <begin position="304"/>
        <end position="324"/>
    </location>
</feature>
<feature type="topological domain" description="Cytoplasmic" evidence="3">
    <location>
        <begin position="325"/>
        <end position="345"/>
    </location>
</feature>
<feature type="transmembrane region" description="Helical" evidence="3">
    <location>
        <begin position="346"/>
        <end position="366"/>
    </location>
</feature>
<feature type="topological domain" description="Extracellular" evidence="3">
    <location>
        <begin position="367"/>
        <end position="394"/>
    </location>
</feature>
<feature type="transmembrane region" description="Helical" evidence="3">
    <location>
        <begin position="395"/>
        <end position="415"/>
    </location>
</feature>
<feature type="topological domain" description="Cytoplasmic" evidence="3">
    <location>
        <begin position="416"/>
        <end position="479"/>
    </location>
</feature>
<feature type="glycosylation site" description="N-linked (GlcNAc...) asparagine" evidence="3">
    <location>
        <position position="48"/>
    </location>
</feature>